<gene>
    <name type="ordered locus">At5g39250</name>
    <name type="ORF">K3K3.16</name>
</gene>
<proteinExistence type="evidence at transcript level"/>
<evidence type="ECO:0000255" key="1">
    <source>
        <dbReference type="PROSITE-ProRule" id="PRU00080"/>
    </source>
</evidence>
<dbReference type="EMBL" id="AB010694">
    <property type="protein sequence ID" value="BAB09380.1"/>
    <property type="molecule type" value="Genomic_DNA"/>
</dbReference>
<dbReference type="EMBL" id="CP002688">
    <property type="protein sequence ID" value="AED94412.1"/>
    <property type="molecule type" value="Genomic_DNA"/>
</dbReference>
<dbReference type="EMBL" id="CP002688">
    <property type="protein sequence ID" value="ANM70439.1"/>
    <property type="molecule type" value="Genomic_DNA"/>
</dbReference>
<dbReference type="EMBL" id="AY091074">
    <property type="protein sequence ID" value="AAM13894.1"/>
    <property type="molecule type" value="mRNA"/>
</dbReference>
<dbReference type="EMBL" id="AY122944">
    <property type="protein sequence ID" value="AAM67477.1"/>
    <property type="molecule type" value="mRNA"/>
</dbReference>
<dbReference type="RefSeq" id="NP_001332049.1">
    <property type="nucleotide sequence ID" value="NM_001344286.1"/>
</dbReference>
<dbReference type="RefSeq" id="NP_198741.1">
    <property type="nucleotide sequence ID" value="NM_123287.4"/>
</dbReference>
<dbReference type="SMR" id="Q9FL82"/>
<dbReference type="BioGRID" id="19172">
    <property type="interactions" value="9"/>
</dbReference>
<dbReference type="FunCoup" id="Q9FL82">
    <property type="interactions" value="1821"/>
</dbReference>
<dbReference type="IntAct" id="Q9FL82">
    <property type="interactions" value="3"/>
</dbReference>
<dbReference type="STRING" id="3702.Q9FL82"/>
<dbReference type="PaxDb" id="3702-AT5G39250.1"/>
<dbReference type="ProteomicsDB" id="230707"/>
<dbReference type="DNASU" id="833921"/>
<dbReference type="EnsemblPlants" id="AT5G39250.1">
    <property type="protein sequence ID" value="AT5G39250.1"/>
    <property type="gene ID" value="AT5G39250"/>
</dbReference>
<dbReference type="EnsemblPlants" id="AT5G39250.2">
    <property type="protein sequence ID" value="AT5G39250.2"/>
    <property type="gene ID" value="AT5G39250"/>
</dbReference>
<dbReference type="GeneID" id="833921"/>
<dbReference type="Gramene" id="AT5G39250.1">
    <property type="protein sequence ID" value="AT5G39250.1"/>
    <property type="gene ID" value="AT5G39250"/>
</dbReference>
<dbReference type="Gramene" id="AT5G39250.2">
    <property type="protein sequence ID" value="AT5G39250.2"/>
    <property type="gene ID" value="AT5G39250"/>
</dbReference>
<dbReference type="KEGG" id="ath:AT5G39250"/>
<dbReference type="Araport" id="AT5G39250"/>
<dbReference type="TAIR" id="AT5G39250"/>
<dbReference type="eggNOG" id="ENOG502QRXG">
    <property type="taxonomic scope" value="Eukaryota"/>
</dbReference>
<dbReference type="HOGENOM" id="CLU_075668_0_0_1"/>
<dbReference type="InParanoid" id="Q9FL82"/>
<dbReference type="OMA" id="MDFCDVA"/>
<dbReference type="PhylomeDB" id="Q9FL82"/>
<dbReference type="PRO" id="PR:Q9FL82"/>
<dbReference type="Proteomes" id="UP000006548">
    <property type="component" value="Chromosome 5"/>
</dbReference>
<dbReference type="ExpressionAtlas" id="Q9FL82">
    <property type="expression patterns" value="baseline and differential"/>
</dbReference>
<dbReference type="Gene3D" id="1.20.1280.50">
    <property type="match status" value="1"/>
</dbReference>
<dbReference type="InterPro" id="IPR044207">
    <property type="entry name" value="At5g39250-like"/>
</dbReference>
<dbReference type="InterPro" id="IPR036047">
    <property type="entry name" value="F-box-like_dom_sf"/>
</dbReference>
<dbReference type="InterPro" id="IPR001810">
    <property type="entry name" value="F-box_dom"/>
</dbReference>
<dbReference type="PANTHER" id="PTHR47722">
    <property type="entry name" value="EXPRESSED PROTEIN"/>
    <property type="match status" value="1"/>
</dbReference>
<dbReference type="PANTHER" id="PTHR47722:SF1">
    <property type="entry name" value="F-BOX DOMAIN CONTAINING PROTEIN, EXPRESSED"/>
    <property type="match status" value="1"/>
</dbReference>
<dbReference type="Pfam" id="PF12937">
    <property type="entry name" value="F-box-like"/>
    <property type="match status" value="1"/>
</dbReference>
<dbReference type="SMART" id="SM00256">
    <property type="entry name" value="FBOX"/>
    <property type="match status" value="1"/>
</dbReference>
<dbReference type="SUPFAM" id="SSF81383">
    <property type="entry name" value="F-box domain"/>
    <property type="match status" value="1"/>
</dbReference>
<dbReference type="PROSITE" id="PS50181">
    <property type="entry name" value="FBOX"/>
    <property type="match status" value="1"/>
</dbReference>
<organism>
    <name type="scientific">Arabidopsis thaliana</name>
    <name type="common">Mouse-ear cress</name>
    <dbReference type="NCBI Taxonomy" id="3702"/>
    <lineage>
        <taxon>Eukaryota</taxon>
        <taxon>Viridiplantae</taxon>
        <taxon>Streptophyta</taxon>
        <taxon>Embryophyta</taxon>
        <taxon>Tracheophyta</taxon>
        <taxon>Spermatophyta</taxon>
        <taxon>Magnoliopsida</taxon>
        <taxon>eudicotyledons</taxon>
        <taxon>Gunneridae</taxon>
        <taxon>Pentapetalae</taxon>
        <taxon>rosids</taxon>
        <taxon>malvids</taxon>
        <taxon>Brassicales</taxon>
        <taxon>Brassicaceae</taxon>
        <taxon>Camelineae</taxon>
        <taxon>Arabidopsis</taxon>
    </lineage>
</organism>
<accession>Q9FL82</accession>
<sequence length="252" mass="29300">MFSEEVLKNVFPLLEGEDLASCMGVCKQWRDIARDDFYWKCQCAKKWPSVCKRHKPPTETYYKMYQTFSKRRLNRALPPPRLSFENLEFFIDIWSEERLVFSGLIPGVALENGIETLPLGISNVLRTHLGRPDYKMVVPAEPRFTIPLNQSVSVSVLVARNDSDKVARIINRSVFDYIDRSSYRALAFEYLDLSPCYPFISGIRAWISLLFMDVEDMNDDGLLDVFGIQLDFNDVADTKEEVLWLLDMLDWK</sequence>
<feature type="chain" id="PRO_0000283536" description="F-box protein At5g39250">
    <location>
        <begin position="1"/>
        <end position="252"/>
    </location>
</feature>
<feature type="domain" description="F-box" evidence="1">
    <location>
        <begin position="1"/>
        <end position="42"/>
    </location>
</feature>
<keyword id="KW-1185">Reference proteome</keyword>
<protein>
    <recommendedName>
        <fullName>F-box protein At5g39250</fullName>
    </recommendedName>
</protein>
<name>FB270_ARATH</name>
<reference key="1">
    <citation type="journal article" date="1998" name="DNA Res.">
        <title>Structural analysis of Arabidopsis thaliana chromosome 5. V. Sequence features of the regions of 1,381,565 bp covered by twenty one physically assigned P1 and TAC clones.</title>
        <authorList>
            <person name="Kaneko T."/>
            <person name="Kotani H."/>
            <person name="Nakamura Y."/>
            <person name="Sato S."/>
            <person name="Asamizu E."/>
            <person name="Miyajima N."/>
            <person name="Tabata S."/>
        </authorList>
    </citation>
    <scope>NUCLEOTIDE SEQUENCE [LARGE SCALE GENOMIC DNA]</scope>
    <source>
        <strain>cv. Columbia</strain>
    </source>
</reference>
<reference key="2">
    <citation type="journal article" date="2017" name="Plant J.">
        <title>Araport11: a complete reannotation of the Arabidopsis thaliana reference genome.</title>
        <authorList>
            <person name="Cheng C.Y."/>
            <person name="Krishnakumar V."/>
            <person name="Chan A.P."/>
            <person name="Thibaud-Nissen F."/>
            <person name="Schobel S."/>
            <person name="Town C.D."/>
        </authorList>
    </citation>
    <scope>GENOME REANNOTATION</scope>
    <source>
        <strain>cv. Columbia</strain>
    </source>
</reference>
<reference key="3">
    <citation type="journal article" date="2003" name="Science">
        <title>Empirical analysis of transcriptional activity in the Arabidopsis genome.</title>
        <authorList>
            <person name="Yamada K."/>
            <person name="Lim J."/>
            <person name="Dale J.M."/>
            <person name="Chen H."/>
            <person name="Shinn P."/>
            <person name="Palm C.J."/>
            <person name="Southwick A.M."/>
            <person name="Wu H.C."/>
            <person name="Kim C.J."/>
            <person name="Nguyen M."/>
            <person name="Pham P.K."/>
            <person name="Cheuk R.F."/>
            <person name="Karlin-Newmann G."/>
            <person name="Liu S.X."/>
            <person name="Lam B."/>
            <person name="Sakano H."/>
            <person name="Wu T."/>
            <person name="Yu G."/>
            <person name="Miranda M."/>
            <person name="Quach H.L."/>
            <person name="Tripp M."/>
            <person name="Chang C.H."/>
            <person name="Lee J.M."/>
            <person name="Toriumi M.J."/>
            <person name="Chan M.M."/>
            <person name="Tang C.C."/>
            <person name="Onodera C.S."/>
            <person name="Deng J.M."/>
            <person name="Akiyama K."/>
            <person name="Ansari Y."/>
            <person name="Arakawa T."/>
            <person name="Banh J."/>
            <person name="Banno F."/>
            <person name="Bowser L."/>
            <person name="Brooks S.Y."/>
            <person name="Carninci P."/>
            <person name="Chao Q."/>
            <person name="Choy N."/>
            <person name="Enju A."/>
            <person name="Goldsmith A.D."/>
            <person name="Gurjal M."/>
            <person name="Hansen N.F."/>
            <person name="Hayashizaki Y."/>
            <person name="Johnson-Hopson C."/>
            <person name="Hsuan V.W."/>
            <person name="Iida K."/>
            <person name="Karnes M."/>
            <person name="Khan S."/>
            <person name="Koesema E."/>
            <person name="Ishida J."/>
            <person name="Jiang P.X."/>
            <person name="Jones T."/>
            <person name="Kawai J."/>
            <person name="Kamiya A."/>
            <person name="Meyers C."/>
            <person name="Nakajima M."/>
            <person name="Narusaka M."/>
            <person name="Seki M."/>
            <person name="Sakurai T."/>
            <person name="Satou M."/>
            <person name="Tamse R."/>
            <person name="Vaysberg M."/>
            <person name="Wallender E.K."/>
            <person name="Wong C."/>
            <person name="Yamamura Y."/>
            <person name="Yuan S."/>
            <person name="Shinozaki K."/>
            <person name="Davis R.W."/>
            <person name="Theologis A."/>
            <person name="Ecker J.R."/>
        </authorList>
    </citation>
    <scope>NUCLEOTIDE SEQUENCE [LARGE SCALE MRNA]</scope>
    <source>
        <strain>cv. Columbia</strain>
    </source>
</reference>